<proteinExistence type="inferred from homology"/>
<accession>A7MUE5</accession>
<protein>
    <recommendedName>
        <fullName evidence="1">Nucleoid-associated protein VIBHAR_03086</fullName>
    </recommendedName>
</protein>
<keyword id="KW-0963">Cytoplasm</keyword>
<keyword id="KW-0238">DNA-binding</keyword>
<dbReference type="EMBL" id="CP000789">
    <property type="protein sequence ID" value="ABU72035.1"/>
    <property type="molecule type" value="Genomic_DNA"/>
</dbReference>
<dbReference type="RefSeq" id="WP_005432961.1">
    <property type="nucleotide sequence ID" value="NC_022269.1"/>
</dbReference>
<dbReference type="SMR" id="A7MUE5"/>
<dbReference type="KEGG" id="vha:VIBHAR_03086"/>
<dbReference type="PATRIC" id="fig|338187.25.peg.3102"/>
<dbReference type="Proteomes" id="UP000008152">
    <property type="component" value="Chromosome I"/>
</dbReference>
<dbReference type="GO" id="GO:0043590">
    <property type="term" value="C:bacterial nucleoid"/>
    <property type="evidence" value="ECO:0007669"/>
    <property type="project" value="UniProtKB-UniRule"/>
</dbReference>
<dbReference type="GO" id="GO:0005829">
    <property type="term" value="C:cytosol"/>
    <property type="evidence" value="ECO:0007669"/>
    <property type="project" value="TreeGrafter"/>
</dbReference>
<dbReference type="GO" id="GO:0003677">
    <property type="term" value="F:DNA binding"/>
    <property type="evidence" value="ECO:0007669"/>
    <property type="project" value="UniProtKB-UniRule"/>
</dbReference>
<dbReference type="FunFam" id="3.30.1310.10:FF:000001">
    <property type="entry name" value="Nucleoid-associated protein YbaB"/>
    <property type="match status" value="1"/>
</dbReference>
<dbReference type="Gene3D" id="3.30.1310.10">
    <property type="entry name" value="Nucleoid-associated protein YbaB-like domain"/>
    <property type="match status" value="1"/>
</dbReference>
<dbReference type="HAMAP" id="MF_00274">
    <property type="entry name" value="DNA_YbaB_EbfC"/>
    <property type="match status" value="1"/>
</dbReference>
<dbReference type="InterPro" id="IPR036894">
    <property type="entry name" value="YbaB-like_sf"/>
</dbReference>
<dbReference type="InterPro" id="IPR004401">
    <property type="entry name" value="YbaB/EbfC"/>
</dbReference>
<dbReference type="NCBIfam" id="TIGR00103">
    <property type="entry name" value="DNA_YbaB_EbfC"/>
    <property type="match status" value="1"/>
</dbReference>
<dbReference type="PANTHER" id="PTHR33449">
    <property type="entry name" value="NUCLEOID-ASSOCIATED PROTEIN YBAB"/>
    <property type="match status" value="1"/>
</dbReference>
<dbReference type="PANTHER" id="PTHR33449:SF1">
    <property type="entry name" value="NUCLEOID-ASSOCIATED PROTEIN YBAB"/>
    <property type="match status" value="1"/>
</dbReference>
<dbReference type="Pfam" id="PF02575">
    <property type="entry name" value="YbaB_DNA_bd"/>
    <property type="match status" value="1"/>
</dbReference>
<dbReference type="PIRSF" id="PIRSF004555">
    <property type="entry name" value="UCP004555"/>
    <property type="match status" value="1"/>
</dbReference>
<dbReference type="SUPFAM" id="SSF82607">
    <property type="entry name" value="YbaB-like"/>
    <property type="match status" value="1"/>
</dbReference>
<evidence type="ECO:0000255" key="1">
    <source>
        <dbReference type="HAMAP-Rule" id="MF_00274"/>
    </source>
</evidence>
<evidence type="ECO:0000256" key="2">
    <source>
        <dbReference type="SAM" id="MobiDB-lite"/>
    </source>
</evidence>
<gene>
    <name type="ordered locus">VIBHAR_03086</name>
</gene>
<sequence>MFGKGGMGNLMKQAQQMQDRMQKLQEEIANMEVTGESGAGLVKVTITGSHSVRRVEIDESLMEDDKEMLEDLIAAAFNDAARRVEETQKEKMASVTGGMQLPPGMKMPF</sequence>
<reference key="1">
    <citation type="submission" date="2007-08" db="EMBL/GenBank/DDBJ databases">
        <authorList>
            <consortium name="The Vibrio harveyi Genome Sequencing Project"/>
            <person name="Bassler B."/>
            <person name="Clifton S.W."/>
            <person name="Fulton L."/>
            <person name="Delehaunty K."/>
            <person name="Fronick C."/>
            <person name="Harrison M."/>
            <person name="Markivic C."/>
            <person name="Fulton R."/>
            <person name="Tin-Wollam A.-M."/>
            <person name="Shah N."/>
            <person name="Pepin K."/>
            <person name="Nash W."/>
            <person name="Thiruvilangam P."/>
            <person name="Bhonagiri V."/>
            <person name="Waters C."/>
            <person name="Tu K.C."/>
            <person name="Irgon J."/>
            <person name="Wilson R.K."/>
        </authorList>
    </citation>
    <scope>NUCLEOTIDE SEQUENCE [LARGE SCALE GENOMIC DNA]</scope>
    <source>
        <strain>ATCC BAA-1116 / BB120</strain>
    </source>
</reference>
<feature type="chain" id="PRO_1000003865" description="Nucleoid-associated protein VIBHAR_03086">
    <location>
        <begin position="1"/>
        <end position="109"/>
    </location>
</feature>
<feature type="region of interest" description="Disordered" evidence="2">
    <location>
        <begin position="1"/>
        <end position="21"/>
    </location>
</feature>
<feature type="region of interest" description="Disordered" evidence="2">
    <location>
        <begin position="88"/>
        <end position="109"/>
    </location>
</feature>
<organism>
    <name type="scientific">Vibrio campbellii (strain ATCC BAA-1116)</name>
    <dbReference type="NCBI Taxonomy" id="2902295"/>
    <lineage>
        <taxon>Bacteria</taxon>
        <taxon>Pseudomonadati</taxon>
        <taxon>Pseudomonadota</taxon>
        <taxon>Gammaproteobacteria</taxon>
        <taxon>Vibrionales</taxon>
        <taxon>Vibrionaceae</taxon>
        <taxon>Vibrio</taxon>
    </lineage>
</organism>
<name>Y3086_VIBC1</name>
<comment type="function">
    <text evidence="1">Binds to DNA and alters its conformation. May be involved in regulation of gene expression, nucleoid organization and DNA protection.</text>
</comment>
<comment type="subunit">
    <text evidence="1">Homodimer.</text>
</comment>
<comment type="subcellular location">
    <subcellularLocation>
        <location evidence="1">Cytoplasm</location>
        <location evidence="1">Nucleoid</location>
    </subcellularLocation>
</comment>
<comment type="similarity">
    <text evidence="1">Belongs to the YbaB/EbfC family.</text>
</comment>